<keyword id="KW-0119">Carbohydrate metabolism</keyword>
<keyword id="KW-0963">Cytoplasm</keyword>
<keyword id="KW-0413">Isomerase</keyword>
<keyword id="KW-0684">Rhamnose metabolism</keyword>
<dbReference type="EC" id="5.1.3.32" evidence="1"/>
<dbReference type="EMBL" id="CP001113">
    <property type="protein sequence ID" value="ACF65501.1"/>
    <property type="molecule type" value="Genomic_DNA"/>
</dbReference>
<dbReference type="RefSeq" id="WP_000619474.1">
    <property type="nucleotide sequence ID" value="NZ_CCMR01000001.1"/>
</dbReference>
<dbReference type="SMR" id="B4SZY8"/>
<dbReference type="KEGG" id="see:SNSL254_A4326"/>
<dbReference type="HOGENOM" id="CLU_100689_2_0_6"/>
<dbReference type="UniPathway" id="UPA00125"/>
<dbReference type="Proteomes" id="UP000008824">
    <property type="component" value="Chromosome"/>
</dbReference>
<dbReference type="GO" id="GO:0005737">
    <property type="term" value="C:cytoplasm"/>
    <property type="evidence" value="ECO:0007669"/>
    <property type="project" value="UniProtKB-SubCell"/>
</dbReference>
<dbReference type="GO" id="GO:0062192">
    <property type="term" value="F:L-rhamnose mutarotase activity"/>
    <property type="evidence" value="ECO:0007669"/>
    <property type="project" value="UniProtKB-EC"/>
</dbReference>
<dbReference type="GO" id="GO:0019301">
    <property type="term" value="P:rhamnose catabolic process"/>
    <property type="evidence" value="ECO:0007669"/>
    <property type="project" value="TreeGrafter"/>
</dbReference>
<dbReference type="Gene3D" id="3.30.70.100">
    <property type="match status" value="1"/>
</dbReference>
<dbReference type="HAMAP" id="MF_01663">
    <property type="entry name" value="L_rham_rotase"/>
    <property type="match status" value="1"/>
</dbReference>
<dbReference type="InterPro" id="IPR011008">
    <property type="entry name" value="Dimeric_a/b-barrel"/>
</dbReference>
<dbReference type="InterPro" id="IPR013448">
    <property type="entry name" value="L-rhamnose_mutarotase"/>
</dbReference>
<dbReference type="InterPro" id="IPR008000">
    <property type="entry name" value="Rham/fucose_mutarotase"/>
</dbReference>
<dbReference type="NCBIfam" id="TIGR02625">
    <property type="entry name" value="YiiL_rotase"/>
    <property type="match status" value="1"/>
</dbReference>
<dbReference type="PANTHER" id="PTHR34389">
    <property type="entry name" value="L-RHAMNOSE MUTAROTASE"/>
    <property type="match status" value="1"/>
</dbReference>
<dbReference type="PANTHER" id="PTHR34389:SF2">
    <property type="entry name" value="L-RHAMNOSE MUTAROTASE"/>
    <property type="match status" value="1"/>
</dbReference>
<dbReference type="Pfam" id="PF05336">
    <property type="entry name" value="rhaM"/>
    <property type="match status" value="1"/>
</dbReference>
<dbReference type="SUPFAM" id="SSF54909">
    <property type="entry name" value="Dimeric alpha+beta barrel"/>
    <property type="match status" value="1"/>
</dbReference>
<protein>
    <recommendedName>
        <fullName evidence="1">L-rhamnose mutarotase</fullName>
        <ecNumber evidence="1">5.1.3.32</ecNumber>
    </recommendedName>
    <alternativeName>
        <fullName evidence="1">Rhamnose 1-epimerase</fullName>
    </alternativeName>
    <alternativeName>
        <fullName evidence="1">Type-3 mutarotase</fullName>
    </alternativeName>
</protein>
<comment type="function">
    <text evidence="1">Involved in the anomeric conversion of L-rhamnose.</text>
</comment>
<comment type="catalytic activity">
    <reaction evidence="1">
        <text>alpha-L-rhamnose = beta-L-rhamnose</text>
        <dbReference type="Rhea" id="RHEA:25584"/>
        <dbReference type="ChEBI" id="CHEBI:27586"/>
        <dbReference type="ChEBI" id="CHEBI:27907"/>
        <dbReference type="EC" id="5.1.3.32"/>
    </reaction>
</comment>
<comment type="pathway">
    <text evidence="1">Carbohydrate metabolism; L-rhamnose metabolism.</text>
</comment>
<comment type="subunit">
    <text evidence="1">Homodimer.</text>
</comment>
<comment type="subcellular location">
    <subcellularLocation>
        <location evidence="1">Cytoplasm</location>
    </subcellularLocation>
</comment>
<comment type="similarity">
    <text evidence="1">Belongs to the rhamnose mutarotase family.</text>
</comment>
<reference key="1">
    <citation type="journal article" date="2011" name="J. Bacteriol.">
        <title>Comparative genomics of 28 Salmonella enterica isolates: evidence for CRISPR-mediated adaptive sublineage evolution.</title>
        <authorList>
            <person name="Fricke W.F."/>
            <person name="Mammel M.K."/>
            <person name="McDermott P.F."/>
            <person name="Tartera C."/>
            <person name="White D.G."/>
            <person name="Leclerc J.E."/>
            <person name="Ravel J."/>
            <person name="Cebula T.A."/>
        </authorList>
    </citation>
    <scope>NUCLEOTIDE SEQUENCE [LARGE SCALE GENOMIC DNA]</scope>
    <source>
        <strain>SL254</strain>
    </source>
</reference>
<feature type="chain" id="PRO_1000187230" description="L-rhamnose mutarotase">
    <location>
        <begin position="1"/>
        <end position="104"/>
    </location>
</feature>
<feature type="active site" description="Proton donor" evidence="1">
    <location>
        <position position="22"/>
    </location>
</feature>
<feature type="binding site" evidence="1">
    <location>
        <position position="18"/>
    </location>
    <ligand>
        <name>substrate</name>
    </ligand>
</feature>
<feature type="binding site" evidence="1">
    <location>
        <position position="41"/>
    </location>
    <ligand>
        <name>substrate</name>
    </ligand>
</feature>
<feature type="binding site" evidence="1">
    <location>
        <begin position="76"/>
        <end position="77"/>
    </location>
    <ligand>
        <name>substrate</name>
    </ligand>
</feature>
<sequence length="104" mass="12306">MIRKAFVMQVNADAHEEYQRRHNPIWPELEAVLKSHGAHHYAIYLDQERNLLFATVEIESEERWNAVASTDVCQRWWKHMRDVMPANPDNSPASAELKEVFYLQ</sequence>
<accession>B4SZY8</accession>
<organism>
    <name type="scientific">Salmonella newport (strain SL254)</name>
    <dbReference type="NCBI Taxonomy" id="423368"/>
    <lineage>
        <taxon>Bacteria</taxon>
        <taxon>Pseudomonadati</taxon>
        <taxon>Pseudomonadota</taxon>
        <taxon>Gammaproteobacteria</taxon>
        <taxon>Enterobacterales</taxon>
        <taxon>Enterobacteriaceae</taxon>
        <taxon>Salmonella</taxon>
    </lineage>
</organism>
<name>RHAM_SALNS</name>
<proteinExistence type="inferred from homology"/>
<gene>
    <name evidence="1" type="primary">rhaM</name>
    <name type="ordered locus">SNSL254_A4326</name>
</gene>
<evidence type="ECO:0000255" key="1">
    <source>
        <dbReference type="HAMAP-Rule" id="MF_01663"/>
    </source>
</evidence>